<evidence type="ECO:0000250" key="1">
    <source>
        <dbReference type="UniProtKB" id="P34405"/>
    </source>
</evidence>
<evidence type="ECO:0000255" key="2"/>
<evidence type="ECO:0000269" key="3">
    <source>
    </source>
</evidence>
<evidence type="ECO:0000303" key="4">
    <source>
    </source>
</evidence>
<evidence type="ECO:0000305" key="5"/>
<evidence type="ECO:0000305" key="6">
    <source>
    </source>
</evidence>
<protein>
    <recommendedName>
        <fullName>Extended FMRFamide-8</fullName>
        <shortName evidence="4">FMRFa-8</shortName>
    </recommendedName>
</protein>
<reference evidence="5" key="1">
    <citation type="journal article" date="2012" name="Syst. Biol.">
        <title>Peptidomics-based phylogeny and biogeography of Mantophasmatodea (Hexapoda).</title>
        <authorList>
            <person name="Predel R."/>
            <person name="Neupert S."/>
            <person name="Huetteroth W."/>
            <person name="Kahnt J."/>
            <person name="Waidelich D."/>
            <person name="Roth S."/>
        </authorList>
    </citation>
    <scope>PROTEIN SEQUENCE</scope>
    <scope>AMIDATION AT LEU-9</scope>
    <source>
        <tissue evidence="3">Thoracic perisympathetic organs</tissue>
    </source>
</reference>
<sequence>ARTDNFVRL</sequence>
<proteinExistence type="evidence at protein level"/>
<comment type="function">
    <text evidence="1">FMRFamides and FMRFamide-like peptides are neuropeptides.</text>
</comment>
<comment type="subcellular location">
    <subcellularLocation>
        <location evidence="6">Secreted</location>
    </subcellularLocation>
</comment>
<comment type="similarity">
    <text evidence="2">Belongs to the FARP (FMRF amide related peptide) family.</text>
</comment>
<keyword id="KW-0027">Amidation</keyword>
<keyword id="KW-0903">Direct protein sequencing</keyword>
<keyword id="KW-0527">Neuropeptide</keyword>
<keyword id="KW-0964">Secreted</keyword>
<organism>
    <name type="scientific">Namaquaphasma ookiepense</name>
    <name type="common">Gladiator bug</name>
    <dbReference type="NCBI Taxonomy" id="409167"/>
    <lineage>
        <taxon>Eukaryota</taxon>
        <taxon>Metazoa</taxon>
        <taxon>Ecdysozoa</taxon>
        <taxon>Arthropoda</taxon>
        <taxon>Hexapoda</taxon>
        <taxon>Insecta</taxon>
        <taxon>Pterygota</taxon>
        <taxon>Neoptera</taxon>
        <taxon>Polyneoptera</taxon>
        <taxon>Mantophasmatodea</taxon>
        <taxon>Austrophasmatidae</taxon>
        <taxon>Namaquaphasma</taxon>
    </lineage>
</organism>
<name>FAR8_NAMOO</name>
<feature type="peptide" id="PRO_0000420503" description="Extended FMRFamide-8">
    <location>
        <begin position="1"/>
        <end position="9"/>
    </location>
</feature>
<feature type="modified residue" description="Leucine amide" evidence="3">
    <location>
        <position position="9"/>
    </location>
</feature>
<feature type="unsure residue" description="L or I" evidence="3">
    <location>
        <position position="9"/>
    </location>
</feature>
<accession>B0M2T8</accession>
<dbReference type="GO" id="GO:0005576">
    <property type="term" value="C:extracellular region"/>
    <property type="evidence" value="ECO:0007669"/>
    <property type="project" value="UniProtKB-SubCell"/>
</dbReference>
<dbReference type="GO" id="GO:0007218">
    <property type="term" value="P:neuropeptide signaling pathway"/>
    <property type="evidence" value="ECO:0007669"/>
    <property type="project" value="UniProtKB-KW"/>
</dbReference>